<accession>A9II17</accession>
<comment type="function">
    <text evidence="1">NDH-1 shuttles electrons from NADH, via FMN and iron-sulfur (Fe-S) centers, to quinones in the respiratory chain. The immediate electron acceptor for the enzyme in this species is believed to be ubiquinone. Couples the redox reaction to proton translocation (for every two electrons transferred, four hydrogen ions are translocated across the cytoplasmic membrane), and thus conserves the redox energy in a proton gradient. This subunit may bind ubiquinone.</text>
</comment>
<comment type="catalytic activity">
    <reaction evidence="1">
        <text>a quinone + NADH + 5 H(+)(in) = a quinol + NAD(+) + 4 H(+)(out)</text>
        <dbReference type="Rhea" id="RHEA:57888"/>
        <dbReference type="ChEBI" id="CHEBI:15378"/>
        <dbReference type="ChEBI" id="CHEBI:24646"/>
        <dbReference type="ChEBI" id="CHEBI:57540"/>
        <dbReference type="ChEBI" id="CHEBI:57945"/>
        <dbReference type="ChEBI" id="CHEBI:132124"/>
    </reaction>
</comment>
<comment type="subunit">
    <text evidence="1">NDH-1 is composed of 14 different subunits. Subunits NuoA, H, J, K, L, M, N constitute the membrane sector of the complex.</text>
</comment>
<comment type="subcellular location">
    <subcellularLocation>
        <location evidence="1">Cell inner membrane</location>
        <topology evidence="1">Multi-pass membrane protein</topology>
    </subcellularLocation>
</comment>
<comment type="similarity">
    <text evidence="1">Belongs to the complex I subunit 1 family.</text>
</comment>
<proteinExistence type="inferred from homology"/>
<dbReference type="EC" id="7.1.1.-" evidence="1"/>
<dbReference type="EMBL" id="AM902716">
    <property type="protein sequence ID" value="CAP42023.1"/>
    <property type="molecule type" value="Genomic_DNA"/>
</dbReference>
<dbReference type="SMR" id="A9II17"/>
<dbReference type="STRING" id="94624.Bpet1684"/>
<dbReference type="KEGG" id="bpt:Bpet1684"/>
<dbReference type="eggNOG" id="COG1005">
    <property type="taxonomic scope" value="Bacteria"/>
</dbReference>
<dbReference type="Proteomes" id="UP000001225">
    <property type="component" value="Chromosome"/>
</dbReference>
<dbReference type="GO" id="GO:0005886">
    <property type="term" value="C:plasma membrane"/>
    <property type="evidence" value="ECO:0007669"/>
    <property type="project" value="UniProtKB-SubCell"/>
</dbReference>
<dbReference type="GO" id="GO:0003954">
    <property type="term" value="F:NADH dehydrogenase activity"/>
    <property type="evidence" value="ECO:0007669"/>
    <property type="project" value="TreeGrafter"/>
</dbReference>
<dbReference type="GO" id="GO:0016655">
    <property type="term" value="F:oxidoreductase activity, acting on NAD(P)H, quinone or similar compound as acceptor"/>
    <property type="evidence" value="ECO:0007669"/>
    <property type="project" value="UniProtKB-UniRule"/>
</dbReference>
<dbReference type="GO" id="GO:0048038">
    <property type="term" value="F:quinone binding"/>
    <property type="evidence" value="ECO:0007669"/>
    <property type="project" value="UniProtKB-KW"/>
</dbReference>
<dbReference type="GO" id="GO:0009060">
    <property type="term" value="P:aerobic respiration"/>
    <property type="evidence" value="ECO:0007669"/>
    <property type="project" value="TreeGrafter"/>
</dbReference>
<dbReference type="HAMAP" id="MF_01350">
    <property type="entry name" value="NDH1_NuoH"/>
    <property type="match status" value="1"/>
</dbReference>
<dbReference type="InterPro" id="IPR001694">
    <property type="entry name" value="NADH_UbQ_OxRdtase_su1/FPO"/>
</dbReference>
<dbReference type="InterPro" id="IPR018086">
    <property type="entry name" value="NADH_UbQ_OxRdtase_su1_CS"/>
</dbReference>
<dbReference type="NCBIfam" id="NF004741">
    <property type="entry name" value="PRK06076.1-2"/>
    <property type="match status" value="1"/>
</dbReference>
<dbReference type="NCBIfam" id="NF004742">
    <property type="entry name" value="PRK06076.1-3"/>
    <property type="match status" value="1"/>
</dbReference>
<dbReference type="PANTHER" id="PTHR11432">
    <property type="entry name" value="NADH DEHYDROGENASE SUBUNIT 1"/>
    <property type="match status" value="1"/>
</dbReference>
<dbReference type="PANTHER" id="PTHR11432:SF3">
    <property type="entry name" value="NADH-UBIQUINONE OXIDOREDUCTASE CHAIN 1"/>
    <property type="match status" value="1"/>
</dbReference>
<dbReference type="Pfam" id="PF00146">
    <property type="entry name" value="NADHdh"/>
    <property type="match status" value="1"/>
</dbReference>
<dbReference type="PROSITE" id="PS00668">
    <property type="entry name" value="COMPLEX1_ND1_2"/>
    <property type="match status" value="1"/>
</dbReference>
<reference key="1">
    <citation type="journal article" date="2008" name="BMC Genomics">
        <title>The missing link: Bordetella petrii is endowed with both the metabolic versatility of environmental bacteria and virulence traits of pathogenic Bordetellae.</title>
        <authorList>
            <person name="Gross R."/>
            <person name="Guzman C.A."/>
            <person name="Sebaihia M."/>
            <person name="Martin dos Santos V.A.P."/>
            <person name="Pieper D.H."/>
            <person name="Koebnik R."/>
            <person name="Lechner M."/>
            <person name="Bartels D."/>
            <person name="Buhrmester J."/>
            <person name="Choudhuri J.V."/>
            <person name="Ebensen T."/>
            <person name="Gaigalat L."/>
            <person name="Herrmann S."/>
            <person name="Khachane A.N."/>
            <person name="Larisch C."/>
            <person name="Link S."/>
            <person name="Linke B."/>
            <person name="Meyer F."/>
            <person name="Mormann S."/>
            <person name="Nakunst D."/>
            <person name="Rueckert C."/>
            <person name="Schneiker-Bekel S."/>
            <person name="Schulze K."/>
            <person name="Voerholter F.-J."/>
            <person name="Yevsa T."/>
            <person name="Engle J.T."/>
            <person name="Goldman W.E."/>
            <person name="Puehler A."/>
            <person name="Goebel U.B."/>
            <person name="Goesmann A."/>
            <person name="Bloecker H."/>
            <person name="Kaiser O."/>
            <person name="Martinez-Arias R."/>
        </authorList>
    </citation>
    <scope>NUCLEOTIDE SEQUENCE [LARGE SCALE GENOMIC DNA]</scope>
    <source>
        <strain>ATCC BAA-461 / DSM 12804 / CCUG 43448</strain>
    </source>
</reference>
<keyword id="KW-0997">Cell inner membrane</keyword>
<keyword id="KW-1003">Cell membrane</keyword>
<keyword id="KW-0472">Membrane</keyword>
<keyword id="KW-0520">NAD</keyword>
<keyword id="KW-0874">Quinone</keyword>
<keyword id="KW-1278">Translocase</keyword>
<keyword id="KW-0812">Transmembrane</keyword>
<keyword id="KW-1133">Transmembrane helix</keyword>
<keyword id="KW-0830">Ubiquinone</keyword>
<sequence length="357" mass="39977">MEWLDILESHGQALLGPTAWLVLWTIVKIVVIAVPIILCVAYLTYWERKMIGWMHVRLGPTRVGFRGLLQPFADVFKLLTKEVVVPTQANKILFVVAPVVTLMPALAAWAVVPFGPEVVLANVNAGLLYVMAITSIGVYGVIVAGWASNSKYAFLGALRASAQMVSYELAIGFVLVTVLLVSGSLNMSEIVLGQTRGWFAEHGLTFLSWNWLPLLPLFVIYVISAVAETNRHPFDVVEGESEIVAGHMVEYSGMAFALFFLGEYANMILLSCMASIMFLGGWTSPIDIAPLTWIPGWIWLGIKTFCVVSLFVWFRASFPRYRYDQIMRLGWKIFIPLTGVWLVVVAIWMQTPWNIWR</sequence>
<evidence type="ECO:0000255" key="1">
    <source>
        <dbReference type="HAMAP-Rule" id="MF_01350"/>
    </source>
</evidence>
<name>NUOH_BORPD</name>
<protein>
    <recommendedName>
        <fullName evidence="1">NADH-quinone oxidoreductase subunit H</fullName>
        <ecNumber evidence="1">7.1.1.-</ecNumber>
    </recommendedName>
    <alternativeName>
        <fullName evidence="1">NADH dehydrogenase I subunit H</fullName>
    </alternativeName>
    <alternativeName>
        <fullName evidence="1">NDH-1 subunit H</fullName>
    </alternativeName>
</protein>
<organism>
    <name type="scientific">Bordetella petrii (strain ATCC BAA-461 / DSM 12804 / CCUG 43448)</name>
    <dbReference type="NCBI Taxonomy" id="340100"/>
    <lineage>
        <taxon>Bacteria</taxon>
        <taxon>Pseudomonadati</taxon>
        <taxon>Pseudomonadota</taxon>
        <taxon>Betaproteobacteria</taxon>
        <taxon>Burkholderiales</taxon>
        <taxon>Alcaligenaceae</taxon>
        <taxon>Bordetella</taxon>
    </lineage>
</organism>
<gene>
    <name evidence="1" type="primary">nuoH</name>
    <name type="ordered locus">Bpet1684</name>
</gene>
<feature type="chain" id="PRO_1000143577" description="NADH-quinone oxidoreductase subunit H">
    <location>
        <begin position="1"/>
        <end position="357"/>
    </location>
</feature>
<feature type="transmembrane region" description="Helical" evidence="1">
    <location>
        <begin position="20"/>
        <end position="40"/>
    </location>
</feature>
<feature type="transmembrane region" description="Helical" evidence="1">
    <location>
        <begin position="92"/>
        <end position="112"/>
    </location>
</feature>
<feature type="transmembrane region" description="Helical" evidence="1">
    <location>
        <begin position="127"/>
        <end position="147"/>
    </location>
</feature>
<feature type="transmembrane region" description="Helical" evidence="1">
    <location>
        <begin position="165"/>
        <end position="185"/>
    </location>
</feature>
<feature type="transmembrane region" description="Helical" evidence="1">
    <location>
        <begin position="206"/>
        <end position="226"/>
    </location>
</feature>
<feature type="transmembrane region" description="Helical" evidence="1">
    <location>
        <begin position="254"/>
        <end position="274"/>
    </location>
</feature>
<feature type="transmembrane region" description="Helical" evidence="1">
    <location>
        <begin position="294"/>
        <end position="314"/>
    </location>
</feature>
<feature type="transmembrane region" description="Helical" evidence="1">
    <location>
        <begin position="329"/>
        <end position="349"/>
    </location>
</feature>